<dbReference type="EMBL" id="AAFI02000200">
    <property type="protein sequence ID" value="EAL60826.1"/>
    <property type="molecule type" value="Genomic_DNA"/>
</dbReference>
<dbReference type="RefSeq" id="XP_629217.1">
    <property type="nucleotide sequence ID" value="XM_629215.1"/>
</dbReference>
<dbReference type="SMR" id="Q54C49"/>
<dbReference type="FunCoup" id="Q54C49">
    <property type="interactions" value="1131"/>
</dbReference>
<dbReference type="STRING" id="44689.Q54C49"/>
<dbReference type="MEROPS" id="M67.975"/>
<dbReference type="PaxDb" id="44689-DDB0233924"/>
<dbReference type="EnsemblProtists" id="EAL60826">
    <property type="protein sequence ID" value="EAL60826"/>
    <property type="gene ID" value="DDB_G0293254"/>
</dbReference>
<dbReference type="GeneID" id="8629099"/>
<dbReference type="KEGG" id="ddi:DDB_G0293254"/>
<dbReference type="dictyBase" id="DDB_G0293254">
    <property type="gene designation" value="eif3F"/>
</dbReference>
<dbReference type="VEuPathDB" id="AmoebaDB:DDB_G0293254"/>
<dbReference type="eggNOG" id="KOG2975">
    <property type="taxonomic scope" value="Eukaryota"/>
</dbReference>
<dbReference type="HOGENOM" id="CLU_027018_0_2_1"/>
<dbReference type="InParanoid" id="Q54C49"/>
<dbReference type="OMA" id="EYFVHFH"/>
<dbReference type="PhylomeDB" id="Q54C49"/>
<dbReference type="Reactome" id="R-DDI-156827">
    <property type="pathway name" value="L13a-mediated translational silencing of Ceruloplasmin expression"/>
</dbReference>
<dbReference type="Reactome" id="R-DDI-72689">
    <property type="pathway name" value="Formation of a pool of free 40S subunits"/>
</dbReference>
<dbReference type="Reactome" id="R-DDI-72695">
    <property type="pathway name" value="Formation of the ternary complex, and subsequently, the 43S complex"/>
</dbReference>
<dbReference type="Reactome" id="R-DDI-72702">
    <property type="pathway name" value="Ribosomal scanning and start codon recognition"/>
</dbReference>
<dbReference type="PRO" id="PR:Q54C49"/>
<dbReference type="Proteomes" id="UP000002195">
    <property type="component" value="Chromosome 6"/>
</dbReference>
<dbReference type="GO" id="GO:0016282">
    <property type="term" value="C:eukaryotic 43S preinitiation complex"/>
    <property type="evidence" value="ECO:0007669"/>
    <property type="project" value="UniProtKB-UniRule"/>
</dbReference>
<dbReference type="GO" id="GO:0033290">
    <property type="term" value="C:eukaryotic 48S preinitiation complex"/>
    <property type="evidence" value="ECO:0007669"/>
    <property type="project" value="UniProtKB-UniRule"/>
</dbReference>
<dbReference type="GO" id="GO:0005852">
    <property type="term" value="C:eukaryotic translation initiation factor 3 complex"/>
    <property type="evidence" value="ECO:0000250"/>
    <property type="project" value="dictyBase"/>
</dbReference>
<dbReference type="GO" id="GO:0071541">
    <property type="term" value="C:eukaryotic translation initiation factor 3 complex, eIF3m"/>
    <property type="evidence" value="ECO:0000318"/>
    <property type="project" value="GO_Central"/>
</dbReference>
<dbReference type="GO" id="GO:0008237">
    <property type="term" value="F:metallopeptidase activity"/>
    <property type="evidence" value="ECO:0007669"/>
    <property type="project" value="InterPro"/>
</dbReference>
<dbReference type="GO" id="GO:0003743">
    <property type="term" value="F:translation initiation factor activity"/>
    <property type="evidence" value="ECO:0007669"/>
    <property type="project" value="UniProtKB-UniRule"/>
</dbReference>
<dbReference type="GO" id="GO:0031369">
    <property type="term" value="F:translation initiation factor binding"/>
    <property type="evidence" value="ECO:0000318"/>
    <property type="project" value="GO_Central"/>
</dbReference>
<dbReference type="GO" id="GO:0001732">
    <property type="term" value="P:formation of cytoplasmic translation initiation complex"/>
    <property type="evidence" value="ECO:0007669"/>
    <property type="project" value="UniProtKB-UniRule"/>
</dbReference>
<dbReference type="GO" id="GO:0006413">
    <property type="term" value="P:translational initiation"/>
    <property type="evidence" value="ECO:0000318"/>
    <property type="project" value="GO_Central"/>
</dbReference>
<dbReference type="CDD" id="cd08064">
    <property type="entry name" value="MPN_eIF3f"/>
    <property type="match status" value="1"/>
</dbReference>
<dbReference type="Gene3D" id="3.40.140.10">
    <property type="entry name" value="Cytidine Deaminase, domain 2"/>
    <property type="match status" value="1"/>
</dbReference>
<dbReference type="HAMAP" id="MF_03005">
    <property type="entry name" value="eIF3f"/>
    <property type="match status" value="1"/>
</dbReference>
<dbReference type="InterPro" id="IPR027531">
    <property type="entry name" value="eIF3f"/>
</dbReference>
<dbReference type="InterPro" id="IPR024969">
    <property type="entry name" value="EIF3F/CSN6-like_C"/>
</dbReference>
<dbReference type="InterPro" id="IPR000555">
    <property type="entry name" value="JAMM/MPN+_dom"/>
</dbReference>
<dbReference type="InterPro" id="IPR037518">
    <property type="entry name" value="MPN"/>
</dbReference>
<dbReference type="PANTHER" id="PTHR10540:SF6">
    <property type="entry name" value="EUKARYOTIC TRANSLATION INITIATION FACTOR 3 SUBUNIT F"/>
    <property type="match status" value="1"/>
</dbReference>
<dbReference type="PANTHER" id="PTHR10540">
    <property type="entry name" value="EUKARYOTIC TRANSLATION INITIATION FACTOR 3 SUBUNIT F-RELATED"/>
    <property type="match status" value="1"/>
</dbReference>
<dbReference type="Pfam" id="PF01398">
    <property type="entry name" value="JAB"/>
    <property type="match status" value="1"/>
</dbReference>
<dbReference type="Pfam" id="PF13012">
    <property type="entry name" value="MitMem_reg"/>
    <property type="match status" value="1"/>
</dbReference>
<dbReference type="SMART" id="SM00232">
    <property type="entry name" value="JAB_MPN"/>
    <property type="match status" value="1"/>
</dbReference>
<dbReference type="PROSITE" id="PS50249">
    <property type="entry name" value="MPN"/>
    <property type="match status" value="1"/>
</dbReference>
<proteinExistence type="inferred from homology"/>
<keyword id="KW-0963">Cytoplasm</keyword>
<keyword id="KW-0396">Initiation factor</keyword>
<keyword id="KW-0648">Protein biosynthesis</keyword>
<keyword id="KW-1185">Reference proteome</keyword>
<organism>
    <name type="scientific">Dictyostelium discoideum</name>
    <name type="common">Social amoeba</name>
    <dbReference type="NCBI Taxonomy" id="44689"/>
    <lineage>
        <taxon>Eukaryota</taxon>
        <taxon>Amoebozoa</taxon>
        <taxon>Evosea</taxon>
        <taxon>Eumycetozoa</taxon>
        <taxon>Dictyostelia</taxon>
        <taxon>Dictyosteliales</taxon>
        <taxon>Dictyosteliaceae</taxon>
        <taxon>Dictyostelium</taxon>
    </lineage>
</organism>
<evidence type="ECO:0000255" key="1">
    <source>
        <dbReference type="HAMAP-Rule" id="MF_03005"/>
    </source>
</evidence>
<evidence type="ECO:0000255" key="2">
    <source>
        <dbReference type="PROSITE-ProRule" id="PRU01182"/>
    </source>
</evidence>
<accession>Q54C49</accession>
<sequence>MQKETSIFLPSQVTVKVHPVVIFNILDHYIRRNVGQDRVIGTLLGFNNDGVLEIRNCFPVVHSETEQIAVEMEYQRKMLDLHLKSSPREPIIGWYATGNDINENSVHINNFYRDEMGNSTPIHLTVDTGLTNDTMGIHAYMAHNLSLNPESSLGSYFSQLPLEILTFEAENAGLESIAQTKYDQQSTSLLSELESLQGSLTKLDEMLESITSYIESVEKGEIQGDPRLGRFLAKTIQALPKANAQVMDKVINNSVKDLLMIVYLSSLTRSQLAVATKISHSLSN</sequence>
<name>EIF3F_DICDI</name>
<comment type="function">
    <text evidence="1">Component of the eukaryotic translation initiation factor 3 (eIF-3) complex, which is involved in protein synthesis of a specialized repertoire of mRNAs and, together with other initiation factors, stimulates binding of mRNA and methionyl-tRNAi to the 40S ribosome. The eIF-3 complex specifically targets and initiates translation of a subset of mRNAs involved in cell proliferation.</text>
</comment>
<comment type="subunit">
    <text evidence="1">Component of the eukaryotic translation initiation factor 3 (eIF-3) complex.</text>
</comment>
<comment type="subcellular location">
    <subcellularLocation>
        <location evidence="1">Cytoplasm</location>
    </subcellularLocation>
</comment>
<comment type="similarity">
    <text evidence="1">Belongs to the eIF-3 subunit F family.</text>
</comment>
<reference key="1">
    <citation type="journal article" date="2005" name="Nature">
        <title>The genome of the social amoeba Dictyostelium discoideum.</title>
        <authorList>
            <person name="Eichinger L."/>
            <person name="Pachebat J.A."/>
            <person name="Gloeckner G."/>
            <person name="Rajandream M.A."/>
            <person name="Sucgang R."/>
            <person name="Berriman M."/>
            <person name="Song J."/>
            <person name="Olsen R."/>
            <person name="Szafranski K."/>
            <person name="Xu Q."/>
            <person name="Tunggal B."/>
            <person name="Kummerfeld S."/>
            <person name="Madera M."/>
            <person name="Konfortov B.A."/>
            <person name="Rivero F."/>
            <person name="Bankier A.T."/>
            <person name="Lehmann R."/>
            <person name="Hamlin N."/>
            <person name="Davies R."/>
            <person name="Gaudet P."/>
            <person name="Fey P."/>
            <person name="Pilcher K."/>
            <person name="Chen G."/>
            <person name="Saunders D."/>
            <person name="Sodergren E.J."/>
            <person name="Davis P."/>
            <person name="Kerhornou A."/>
            <person name="Nie X."/>
            <person name="Hall N."/>
            <person name="Anjard C."/>
            <person name="Hemphill L."/>
            <person name="Bason N."/>
            <person name="Farbrother P."/>
            <person name="Desany B."/>
            <person name="Just E."/>
            <person name="Morio T."/>
            <person name="Rost R."/>
            <person name="Churcher C.M."/>
            <person name="Cooper J."/>
            <person name="Haydock S."/>
            <person name="van Driessche N."/>
            <person name="Cronin A."/>
            <person name="Goodhead I."/>
            <person name="Muzny D.M."/>
            <person name="Mourier T."/>
            <person name="Pain A."/>
            <person name="Lu M."/>
            <person name="Harper D."/>
            <person name="Lindsay R."/>
            <person name="Hauser H."/>
            <person name="James K.D."/>
            <person name="Quiles M."/>
            <person name="Madan Babu M."/>
            <person name="Saito T."/>
            <person name="Buchrieser C."/>
            <person name="Wardroper A."/>
            <person name="Felder M."/>
            <person name="Thangavelu M."/>
            <person name="Johnson D."/>
            <person name="Knights A."/>
            <person name="Loulseged H."/>
            <person name="Mungall K.L."/>
            <person name="Oliver K."/>
            <person name="Price C."/>
            <person name="Quail M.A."/>
            <person name="Urushihara H."/>
            <person name="Hernandez J."/>
            <person name="Rabbinowitsch E."/>
            <person name="Steffen D."/>
            <person name="Sanders M."/>
            <person name="Ma J."/>
            <person name="Kohara Y."/>
            <person name="Sharp S."/>
            <person name="Simmonds M.N."/>
            <person name="Spiegler S."/>
            <person name="Tivey A."/>
            <person name="Sugano S."/>
            <person name="White B."/>
            <person name="Walker D."/>
            <person name="Woodward J.R."/>
            <person name="Winckler T."/>
            <person name="Tanaka Y."/>
            <person name="Shaulsky G."/>
            <person name="Schleicher M."/>
            <person name="Weinstock G.M."/>
            <person name="Rosenthal A."/>
            <person name="Cox E.C."/>
            <person name="Chisholm R.L."/>
            <person name="Gibbs R.A."/>
            <person name="Loomis W.F."/>
            <person name="Platzer M."/>
            <person name="Kay R.R."/>
            <person name="Williams J.G."/>
            <person name="Dear P.H."/>
            <person name="Noegel A.A."/>
            <person name="Barrell B.G."/>
            <person name="Kuspa A."/>
        </authorList>
    </citation>
    <scope>NUCLEOTIDE SEQUENCE [LARGE SCALE GENOMIC DNA]</scope>
    <source>
        <strain>AX4</strain>
    </source>
</reference>
<protein>
    <recommendedName>
        <fullName evidence="1">Eukaryotic translation initiation factor 3 subunit F</fullName>
        <shortName evidence="1">eIF3f</shortName>
    </recommendedName>
    <alternativeName>
        <fullName evidence="1">Eukaryotic translation initiation factor 3 subunit 5</fullName>
    </alternativeName>
</protein>
<feature type="chain" id="PRO_0000328346" description="Eukaryotic translation initiation factor 3 subunit F">
    <location>
        <begin position="1"/>
        <end position="284"/>
    </location>
</feature>
<feature type="domain" description="MPN" evidence="2">
    <location>
        <begin position="15"/>
        <end position="146"/>
    </location>
</feature>
<gene>
    <name type="primary">eif3f</name>
    <name type="synonym">eif3s5</name>
    <name type="ORF">DDB_G0293254</name>
</gene>